<protein>
    <recommendedName>
        <fullName evidence="1">NADH-quinone oxidoreductase subunit C</fullName>
        <ecNumber evidence="1">7.1.1.-</ecNumber>
    </recommendedName>
    <alternativeName>
        <fullName evidence="1">NADH dehydrogenase I subunit C</fullName>
    </alternativeName>
    <alternativeName>
        <fullName evidence="1">NDH-1 subunit C</fullName>
    </alternativeName>
</protein>
<reference key="1">
    <citation type="journal article" date="2003" name="Proc. Natl. Acad. Sci. U.S.A.">
        <title>The complete genome sequence of Mycobacterium bovis.</title>
        <authorList>
            <person name="Garnier T."/>
            <person name="Eiglmeier K."/>
            <person name="Camus J.-C."/>
            <person name="Medina N."/>
            <person name="Mansoor H."/>
            <person name="Pryor M."/>
            <person name="Duthoy S."/>
            <person name="Grondin S."/>
            <person name="Lacroix C."/>
            <person name="Monsempe C."/>
            <person name="Simon S."/>
            <person name="Harris B."/>
            <person name="Atkin R."/>
            <person name="Doggett J."/>
            <person name="Mayes R."/>
            <person name="Keating L."/>
            <person name="Wheeler P.R."/>
            <person name="Parkhill J."/>
            <person name="Barrell B.G."/>
            <person name="Cole S.T."/>
            <person name="Gordon S.V."/>
            <person name="Hewinson R.G."/>
        </authorList>
    </citation>
    <scope>NUCLEOTIDE SEQUENCE [LARGE SCALE GENOMIC DNA]</scope>
    <source>
        <strain>ATCC BAA-935 / AF2122/97</strain>
    </source>
</reference>
<reference key="2">
    <citation type="journal article" date="2017" name="Genome Announc.">
        <title>Updated reference genome sequence and annotation of Mycobacterium bovis AF2122/97.</title>
        <authorList>
            <person name="Malone K.M."/>
            <person name="Farrell D."/>
            <person name="Stuber T.P."/>
            <person name="Schubert O.T."/>
            <person name="Aebersold R."/>
            <person name="Robbe-Austerman S."/>
            <person name="Gordon S.V."/>
        </authorList>
    </citation>
    <scope>NUCLEOTIDE SEQUENCE [LARGE SCALE GENOMIC DNA]</scope>
    <scope>GENOME REANNOTATION</scope>
    <source>
        <strain>ATCC BAA-935 / AF2122/97</strain>
    </source>
</reference>
<comment type="function">
    <text evidence="1">NDH-1 shuttles electrons from NADH, via FMN and iron-sulfur (Fe-S) centers, to quinones in the respiratory chain. The immediate electron acceptor for the enzyme in this species is believed to be a menaquinone. Couples the redox reaction to proton translocation (for every two electrons transferred, four hydrogen ions are translocated across the cytoplasmic membrane), and thus conserves the redox energy in a proton gradient.</text>
</comment>
<comment type="catalytic activity">
    <reaction evidence="1">
        <text>a quinone + NADH + 5 H(+)(in) = a quinol + NAD(+) + 4 H(+)(out)</text>
        <dbReference type="Rhea" id="RHEA:57888"/>
        <dbReference type="ChEBI" id="CHEBI:15378"/>
        <dbReference type="ChEBI" id="CHEBI:24646"/>
        <dbReference type="ChEBI" id="CHEBI:57540"/>
        <dbReference type="ChEBI" id="CHEBI:57945"/>
        <dbReference type="ChEBI" id="CHEBI:132124"/>
    </reaction>
</comment>
<comment type="subunit">
    <text evidence="1">NDH-1 is composed of 14 different subunits. Subunits NuoB, C, D, E, F, and G constitute the peripheral sector of the complex.</text>
</comment>
<comment type="subcellular location">
    <subcellularLocation>
        <location evidence="1">Cell membrane</location>
        <topology evidence="1">Peripheral membrane protein</topology>
        <orientation evidence="1">Cytoplasmic side</orientation>
    </subcellularLocation>
</comment>
<comment type="similarity">
    <text evidence="1">Belongs to the complex I 30 kDa subunit family.</text>
</comment>
<feature type="chain" id="PRO_0000118671" description="NADH-quinone oxidoreductase subunit C">
    <location>
        <begin position="1"/>
        <end position="236"/>
    </location>
</feature>
<feature type="region of interest" description="Disordered" evidence="2">
    <location>
        <begin position="1"/>
        <end position="20"/>
    </location>
</feature>
<gene>
    <name evidence="1" type="primary">nuoC</name>
    <name type="ordered locus">BQ2027_MB3171</name>
</gene>
<dbReference type="EC" id="7.1.1.-" evidence="1"/>
<dbReference type="EMBL" id="LT708304">
    <property type="protein sequence ID" value="SIU01798.1"/>
    <property type="molecule type" value="Genomic_DNA"/>
</dbReference>
<dbReference type="RefSeq" id="NP_856816.1">
    <property type="nucleotide sequence ID" value="NC_002945.3"/>
</dbReference>
<dbReference type="RefSeq" id="WP_003416425.1">
    <property type="nucleotide sequence ID" value="NC_002945.4"/>
</dbReference>
<dbReference type="SMR" id="P65572"/>
<dbReference type="KEGG" id="mbo:BQ2027_MB3171"/>
<dbReference type="PATRIC" id="fig|233413.5.peg.3489"/>
<dbReference type="Proteomes" id="UP000001419">
    <property type="component" value="Chromosome"/>
</dbReference>
<dbReference type="GO" id="GO:0005886">
    <property type="term" value="C:plasma membrane"/>
    <property type="evidence" value="ECO:0007669"/>
    <property type="project" value="UniProtKB-SubCell"/>
</dbReference>
<dbReference type="GO" id="GO:0008137">
    <property type="term" value="F:NADH dehydrogenase (ubiquinone) activity"/>
    <property type="evidence" value="ECO:0007669"/>
    <property type="project" value="InterPro"/>
</dbReference>
<dbReference type="GO" id="GO:0050136">
    <property type="term" value="F:NADH:ubiquinone reductase (non-electrogenic) activity"/>
    <property type="evidence" value="ECO:0007669"/>
    <property type="project" value="UniProtKB-UniRule"/>
</dbReference>
<dbReference type="GO" id="GO:0048038">
    <property type="term" value="F:quinone binding"/>
    <property type="evidence" value="ECO:0007669"/>
    <property type="project" value="UniProtKB-KW"/>
</dbReference>
<dbReference type="FunFam" id="3.30.460.80:FF:000006">
    <property type="entry name" value="NADH-quinone oxidoreductase subunit C"/>
    <property type="match status" value="1"/>
</dbReference>
<dbReference type="Gene3D" id="3.30.460.80">
    <property type="entry name" value="NADH:ubiquinone oxidoreductase, 30kDa subunit"/>
    <property type="match status" value="1"/>
</dbReference>
<dbReference type="HAMAP" id="MF_01357">
    <property type="entry name" value="NDH1_NuoC"/>
    <property type="match status" value="1"/>
</dbReference>
<dbReference type="InterPro" id="IPR010218">
    <property type="entry name" value="NADH_DH_suC"/>
</dbReference>
<dbReference type="InterPro" id="IPR037232">
    <property type="entry name" value="NADH_quin_OxRdtase_su_C/D-like"/>
</dbReference>
<dbReference type="InterPro" id="IPR001268">
    <property type="entry name" value="NADH_UbQ_OxRdtase_30kDa_su"/>
</dbReference>
<dbReference type="NCBIfam" id="TIGR01961">
    <property type="entry name" value="NuoC_fam"/>
    <property type="match status" value="1"/>
</dbReference>
<dbReference type="NCBIfam" id="NF005856">
    <property type="entry name" value="PRK07785.1"/>
    <property type="match status" value="1"/>
</dbReference>
<dbReference type="PANTHER" id="PTHR10884:SF14">
    <property type="entry name" value="NADH DEHYDROGENASE [UBIQUINONE] IRON-SULFUR PROTEIN 3, MITOCHONDRIAL"/>
    <property type="match status" value="1"/>
</dbReference>
<dbReference type="PANTHER" id="PTHR10884">
    <property type="entry name" value="NADH DEHYDROGENASE UBIQUINONE IRON-SULFUR PROTEIN 3"/>
    <property type="match status" value="1"/>
</dbReference>
<dbReference type="Pfam" id="PF00329">
    <property type="entry name" value="Complex1_30kDa"/>
    <property type="match status" value="1"/>
</dbReference>
<dbReference type="SUPFAM" id="SSF143243">
    <property type="entry name" value="Nqo5-like"/>
    <property type="match status" value="1"/>
</dbReference>
<name>NUOC_MYCBO</name>
<keyword id="KW-1003">Cell membrane</keyword>
<keyword id="KW-0472">Membrane</keyword>
<keyword id="KW-0520">NAD</keyword>
<keyword id="KW-0874">Quinone</keyword>
<keyword id="KW-1185">Reference proteome</keyword>
<keyword id="KW-1278">Translocase</keyword>
<keyword id="KW-0813">Transport</keyword>
<proteinExistence type="inferred from homology"/>
<sequence length="236" mass="26932">MSPPNQDAQEGRPDSPTAEVVDVRRGMFGVSGTGDTSGYGRLVRQVVLPGSSPRPYGGYFDDIVDRLAEALRHERVEFEDAVEKVVVYRDELTLHVRRDLLPRVAQRLRDEPELRFELCLGVSGVHYPHETGRELHAVYPLQSITHNRRLRLEVSAPDSDPHIPSLFAIYPTNDWHERETYDFFGIIFDGHPALTRIEMPDDWQGHPQRKDYPLGGIPVEYKGAQIPPPDERRGYN</sequence>
<organism>
    <name type="scientific">Mycobacterium bovis (strain ATCC BAA-935 / AF2122/97)</name>
    <dbReference type="NCBI Taxonomy" id="233413"/>
    <lineage>
        <taxon>Bacteria</taxon>
        <taxon>Bacillati</taxon>
        <taxon>Actinomycetota</taxon>
        <taxon>Actinomycetes</taxon>
        <taxon>Mycobacteriales</taxon>
        <taxon>Mycobacteriaceae</taxon>
        <taxon>Mycobacterium</taxon>
        <taxon>Mycobacterium tuberculosis complex</taxon>
    </lineage>
</organism>
<evidence type="ECO:0000255" key="1">
    <source>
        <dbReference type="HAMAP-Rule" id="MF_01357"/>
    </source>
</evidence>
<evidence type="ECO:0000256" key="2">
    <source>
        <dbReference type="SAM" id="MobiDB-lite"/>
    </source>
</evidence>
<accession>P65572</accession>
<accession>A0A1R3Y3L0</accession>
<accession>P95179</accession>
<accession>X2BME6</accession>